<proteinExistence type="inferred from homology"/>
<accession>Q87E70</accession>
<comment type="function">
    <text evidence="1">This is one of the proteins that bind and probably mediate the attachment of the 5S RNA into the large ribosomal subunit, where it forms part of the central protuberance. In the 70S ribosome it contacts protein S13 of the 30S subunit (bridge B1b), connecting the 2 subunits; this bridge is implicated in subunit movement. Contacts the P site tRNA; the 5S rRNA and some of its associated proteins might help stabilize positioning of ribosome-bound tRNAs.</text>
</comment>
<comment type="subunit">
    <text evidence="1">Part of the 50S ribosomal subunit; part of the 5S rRNA/L5/L18/L25 subcomplex. Contacts the 5S rRNA and the P site tRNA. Forms a bridge to the 30S subunit in the 70S ribosome.</text>
</comment>
<comment type="similarity">
    <text evidence="1">Belongs to the universal ribosomal protein uL5 family.</text>
</comment>
<evidence type="ECO:0000255" key="1">
    <source>
        <dbReference type="HAMAP-Rule" id="MF_01333"/>
    </source>
</evidence>
<evidence type="ECO:0000305" key="2"/>
<feature type="chain" id="PRO_0000125032" description="Large ribosomal subunit protein uL5">
    <location>
        <begin position="1"/>
        <end position="179"/>
    </location>
</feature>
<gene>
    <name evidence="1" type="primary">rplE</name>
    <name type="ordered locus">PD_0449</name>
</gene>
<keyword id="KW-1185">Reference proteome</keyword>
<keyword id="KW-0687">Ribonucleoprotein</keyword>
<keyword id="KW-0689">Ribosomal protein</keyword>
<keyword id="KW-0694">RNA-binding</keyword>
<keyword id="KW-0699">rRNA-binding</keyword>
<keyword id="KW-0820">tRNA-binding</keyword>
<name>RL5_XYLFT</name>
<reference key="1">
    <citation type="journal article" date="2003" name="J. Bacteriol.">
        <title>Comparative analyses of the complete genome sequences of Pierce's disease and citrus variegated chlorosis strains of Xylella fastidiosa.</title>
        <authorList>
            <person name="Van Sluys M.A."/>
            <person name="de Oliveira M.C."/>
            <person name="Monteiro-Vitorello C.B."/>
            <person name="Miyaki C.Y."/>
            <person name="Furlan L.R."/>
            <person name="Camargo L.E.A."/>
            <person name="da Silva A.C.R."/>
            <person name="Moon D.H."/>
            <person name="Takita M.A."/>
            <person name="Lemos E.G.M."/>
            <person name="Machado M.A."/>
            <person name="Ferro M.I.T."/>
            <person name="da Silva F.R."/>
            <person name="Goldman M.H.S."/>
            <person name="Goldman G.H."/>
            <person name="Lemos M.V.F."/>
            <person name="El-Dorry H."/>
            <person name="Tsai S.M."/>
            <person name="Carrer H."/>
            <person name="Carraro D.M."/>
            <person name="de Oliveira R.C."/>
            <person name="Nunes L.R."/>
            <person name="Siqueira W.J."/>
            <person name="Coutinho L.L."/>
            <person name="Kimura E.T."/>
            <person name="Ferro E.S."/>
            <person name="Harakava R."/>
            <person name="Kuramae E.E."/>
            <person name="Marino C.L."/>
            <person name="Giglioti E."/>
            <person name="Abreu I.L."/>
            <person name="Alves L.M.C."/>
            <person name="do Amaral A.M."/>
            <person name="Baia G.S."/>
            <person name="Blanco S.R."/>
            <person name="Brito M.S."/>
            <person name="Cannavan F.S."/>
            <person name="Celestino A.V."/>
            <person name="da Cunha A.F."/>
            <person name="Fenille R.C."/>
            <person name="Ferro J.A."/>
            <person name="Formighieri E.F."/>
            <person name="Kishi L.T."/>
            <person name="Leoni S.G."/>
            <person name="Oliveira A.R."/>
            <person name="Rosa V.E. Jr."/>
            <person name="Sassaki F.T."/>
            <person name="Sena J.A.D."/>
            <person name="de Souza A.A."/>
            <person name="Truffi D."/>
            <person name="Tsukumo F."/>
            <person name="Yanai G.M."/>
            <person name="Zaros L.G."/>
            <person name="Civerolo E.L."/>
            <person name="Simpson A.J.G."/>
            <person name="Almeida N.F. Jr."/>
            <person name="Setubal J.C."/>
            <person name="Kitajima J.P."/>
        </authorList>
    </citation>
    <scope>NUCLEOTIDE SEQUENCE [LARGE SCALE GENOMIC DNA]</scope>
    <source>
        <strain>Temecula1 / ATCC 700964</strain>
    </source>
</reference>
<protein>
    <recommendedName>
        <fullName evidence="1">Large ribosomal subunit protein uL5</fullName>
    </recommendedName>
    <alternativeName>
        <fullName evidence="2">50S ribosomal protein L5</fullName>
    </alternativeName>
</protein>
<sequence length="179" mass="20019">MTRLENMYKKEVVPALIKRFGYSNPMAVPRLVKITLNMGVGEAATNKKVLENALADMAKISGQKPIVTKSRISVASFKIRNGWPIGCKTTLRRSKMYEFLDRLINISLPCVRDFRGIPPRSFDGRGNFNMGVKEQVVFPEIDFDAVDAIRGMDIAITTTANSDAEAKALLDAFNFPFRN</sequence>
<organism>
    <name type="scientific">Xylella fastidiosa (strain Temecula1 / ATCC 700964)</name>
    <dbReference type="NCBI Taxonomy" id="183190"/>
    <lineage>
        <taxon>Bacteria</taxon>
        <taxon>Pseudomonadati</taxon>
        <taxon>Pseudomonadota</taxon>
        <taxon>Gammaproteobacteria</taxon>
        <taxon>Lysobacterales</taxon>
        <taxon>Lysobacteraceae</taxon>
        <taxon>Xylella</taxon>
    </lineage>
</organism>
<dbReference type="EMBL" id="AE009442">
    <property type="protein sequence ID" value="AAO28328.1"/>
    <property type="molecule type" value="Genomic_DNA"/>
</dbReference>
<dbReference type="RefSeq" id="WP_004090114.1">
    <property type="nucleotide sequence ID" value="NC_004556.1"/>
</dbReference>
<dbReference type="SMR" id="Q87E70"/>
<dbReference type="GeneID" id="93904151"/>
<dbReference type="KEGG" id="xft:PD_0449"/>
<dbReference type="HOGENOM" id="CLU_061015_2_1_6"/>
<dbReference type="Proteomes" id="UP000002516">
    <property type="component" value="Chromosome"/>
</dbReference>
<dbReference type="GO" id="GO:1990904">
    <property type="term" value="C:ribonucleoprotein complex"/>
    <property type="evidence" value="ECO:0007669"/>
    <property type="project" value="UniProtKB-KW"/>
</dbReference>
<dbReference type="GO" id="GO:0005840">
    <property type="term" value="C:ribosome"/>
    <property type="evidence" value="ECO:0007669"/>
    <property type="project" value="UniProtKB-KW"/>
</dbReference>
<dbReference type="GO" id="GO:0019843">
    <property type="term" value="F:rRNA binding"/>
    <property type="evidence" value="ECO:0007669"/>
    <property type="project" value="UniProtKB-UniRule"/>
</dbReference>
<dbReference type="GO" id="GO:0003735">
    <property type="term" value="F:structural constituent of ribosome"/>
    <property type="evidence" value="ECO:0007669"/>
    <property type="project" value="InterPro"/>
</dbReference>
<dbReference type="GO" id="GO:0000049">
    <property type="term" value="F:tRNA binding"/>
    <property type="evidence" value="ECO:0007669"/>
    <property type="project" value="UniProtKB-UniRule"/>
</dbReference>
<dbReference type="GO" id="GO:0006412">
    <property type="term" value="P:translation"/>
    <property type="evidence" value="ECO:0007669"/>
    <property type="project" value="UniProtKB-UniRule"/>
</dbReference>
<dbReference type="FunFam" id="3.30.1440.10:FF:000001">
    <property type="entry name" value="50S ribosomal protein L5"/>
    <property type="match status" value="1"/>
</dbReference>
<dbReference type="Gene3D" id="3.30.1440.10">
    <property type="match status" value="1"/>
</dbReference>
<dbReference type="HAMAP" id="MF_01333_B">
    <property type="entry name" value="Ribosomal_uL5_B"/>
    <property type="match status" value="1"/>
</dbReference>
<dbReference type="InterPro" id="IPR002132">
    <property type="entry name" value="Ribosomal_uL5"/>
</dbReference>
<dbReference type="InterPro" id="IPR020930">
    <property type="entry name" value="Ribosomal_uL5_bac-type"/>
</dbReference>
<dbReference type="InterPro" id="IPR031309">
    <property type="entry name" value="Ribosomal_uL5_C"/>
</dbReference>
<dbReference type="InterPro" id="IPR020929">
    <property type="entry name" value="Ribosomal_uL5_CS"/>
</dbReference>
<dbReference type="InterPro" id="IPR022803">
    <property type="entry name" value="Ribosomal_uL5_dom_sf"/>
</dbReference>
<dbReference type="InterPro" id="IPR031310">
    <property type="entry name" value="Ribosomal_uL5_N"/>
</dbReference>
<dbReference type="NCBIfam" id="NF000585">
    <property type="entry name" value="PRK00010.1"/>
    <property type="match status" value="1"/>
</dbReference>
<dbReference type="PANTHER" id="PTHR11994">
    <property type="entry name" value="60S RIBOSOMAL PROTEIN L11-RELATED"/>
    <property type="match status" value="1"/>
</dbReference>
<dbReference type="Pfam" id="PF00281">
    <property type="entry name" value="Ribosomal_L5"/>
    <property type="match status" value="1"/>
</dbReference>
<dbReference type="Pfam" id="PF00673">
    <property type="entry name" value="Ribosomal_L5_C"/>
    <property type="match status" value="1"/>
</dbReference>
<dbReference type="PIRSF" id="PIRSF002161">
    <property type="entry name" value="Ribosomal_L5"/>
    <property type="match status" value="1"/>
</dbReference>
<dbReference type="SUPFAM" id="SSF55282">
    <property type="entry name" value="RL5-like"/>
    <property type="match status" value="1"/>
</dbReference>
<dbReference type="PROSITE" id="PS00358">
    <property type="entry name" value="RIBOSOMAL_L5"/>
    <property type="match status" value="1"/>
</dbReference>